<sequence length="384" mass="44516">MLASYASDPLKSRGRLYKEIPTYYRNEFERDRDRIIHTNAFRRLQYKTQVFINHEEGDHYRNRLTHSLEVATVARSVANTLNLSSDLAETIALAHDLGHTPFGHVGEKALNECMKEYNGFSHNSQSLKILTLLEKRYAAYNGVNLTWEVLEGIVKHNGPILGAINEYVAEYNKQNDLELNTYASAEAQIASLADDISYISHDLEDSIIAKIIDFNNLAELQYIDNYVFKLKSKFKDISPSCLIYEIVRKLIHELITDLLLQTKENLKKEKITNINEIRNLHYQIVDFTEKTNERINETKKFLHKRVYESNKMIAISIKCTKIVQGLFKIYMDDINLLPTNWKILIDSNETYSKARVIADYIAGMTDRFAIQEYNQLCAPKFNKI</sequence>
<organism>
    <name type="scientific">Rickettsia typhi (strain ATCC VR-144 / Wilmington)</name>
    <dbReference type="NCBI Taxonomy" id="257363"/>
    <lineage>
        <taxon>Bacteria</taxon>
        <taxon>Pseudomonadati</taxon>
        <taxon>Pseudomonadota</taxon>
        <taxon>Alphaproteobacteria</taxon>
        <taxon>Rickettsiales</taxon>
        <taxon>Rickettsiaceae</taxon>
        <taxon>Rickettsieae</taxon>
        <taxon>Rickettsia</taxon>
        <taxon>typhus group</taxon>
    </lineage>
</organism>
<gene>
    <name type="ordered locus">RT0068</name>
</gene>
<keyword id="KW-0378">Hydrolase</keyword>
<evidence type="ECO:0000255" key="1">
    <source>
        <dbReference type="HAMAP-Rule" id="MF_01212"/>
    </source>
</evidence>
<evidence type="ECO:0000255" key="2">
    <source>
        <dbReference type="PROSITE-ProRule" id="PRU01175"/>
    </source>
</evidence>
<protein>
    <recommendedName>
        <fullName evidence="1">Deoxyguanosinetriphosphate triphosphohydrolase-like protein</fullName>
    </recommendedName>
</protein>
<comment type="similarity">
    <text evidence="1">Belongs to the dGTPase family. Type 2 subfamily.</text>
</comment>
<feature type="chain" id="PRO_0000272409" description="Deoxyguanosinetriphosphate triphosphohydrolase-like protein">
    <location>
        <begin position="1"/>
        <end position="384"/>
    </location>
</feature>
<feature type="domain" description="HD" evidence="2">
    <location>
        <begin position="63"/>
        <end position="199"/>
    </location>
</feature>
<proteinExistence type="inferred from homology"/>
<accession>Q68XT8</accession>
<reference key="1">
    <citation type="journal article" date="2004" name="J. Bacteriol.">
        <title>Complete genome sequence of Rickettsia typhi and comparison with sequences of other Rickettsiae.</title>
        <authorList>
            <person name="McLeod M.P."/>
            <person name="Qin X."/>
            <person name="Karpathy S.E."/>
            <person name="Gioia J."/>
            <person name="Highlander S.K."/>
            <person name="Fox G.E."/>
            <person name="McNeill T.Z."/>
            <person name="Jiang H."/>
            <person name="Muzny D."/>
            <person name="Jacob L.S."/>
            <person name="Hawes A.C."/>
            <person name="Sodergren E."/>
            <person name="Gill R."/>
            <person name="Hume J."/>
            <person name="Morgan M."/>
            <person name="Fan G."/>
            <person name="Amin A.G."/>
            <person name="Gibbs R.A."/>
            <person name="Hong C."/>
            <person name="Yu X.-J."/>
            <person name="Walker D.H."/>
            <person name="Weinstock G.M."/>
        </authorList>
    </citation>
    <scope>NUCLEOTIDE SEQUENCE [LARGE SCALE GENOMIC DNA]</scope>
    <source>
        <strain>ATCC VR-144 / Wilmington</strain>
    </source>
</reference>
<dbReference type="EMBL" id="AE017197">
    <property type="protein sequence ID" value="AAU03554.1"/>
    <property type="molecule type" value="Genomic_DNA"/>
</dbReference>
<dbReference type="RefSeq" id="WP_011190541.1">
    <property type="nucleotide sequence ID" value="NC_006142.1"/>
</dbReference>
<dbReference type="SMR" id="Q68XT8"/>
<dbReference type="KEGG" id="rty:RT0068"/>
<dbReference type="eggNOG" id="COG0232">
    <property type="taxonomic scope" value="Bacteria"/>
</dbReference>
<dbReference type="HOGENOM" id="CLU_028163_1_0_5"/>
<dbReference type="OrthoDB" id="9803619at2"/>
<dbReference type="Proteomes" id="UP000000604">
    <property type="component" value="Chromosome"/>
</dbReference>
<dbReference type="GO" id="GO:0008832">
    <property type="term" value="F:dGTPase activity"/>
    <property type="evidence" value="ECO:0007669"/>
    <property type="project" value="TreeGrafter"/>
</dbReference>
<dbReference type="GO" id="GO:0006203">
    <property type="term" value="P:dGTP catabolic process"/>
    <property type="evidence" value="ECO:0007669"/>
    <property type="project" value="TreeGrafter"/>
</dbReference>
<dbReference type="CDD" id="cd00077">
    <property type="entry name" value="HDc"/>
    <property type="match status" value="1"/>
</dbReference>
<dbReference type="Gene3D" id="1.10.3210.10">
    <property type="entry name" value="Hypothetical protein af1432"/>
    <property type="match status" value="1"/>
</dbReference>
<dbReference type="HAMAP" id="MF_01212">
    <property type="entry name" value="dGTPase_type2"/>
    <property type="match status" value="1"/>
</dbReference>
<dbReference type="InterPro" id="IPR006261">
    <property type="entry name" value="dGTPase"/>
</dbReference>
<dbReference type="InterPro" id="IPR050135">
    <property type="entry name" value="dGTPase-like"/>
</dbReference>
<dbReference type="InterPro" id="IPR023023">
    <property type="entry name" value="dNTPase_2"/>
</dbReference>
<dbReference type="InterPro" id="IPR003607">
    <property type="entry name" value="HD/PDEase_dom"/>
</dbReference>
<dbReference type="InterPro" id="IPR006674">
    <property type="entry name" value="HD_domain"/>
</dbReference>
<dbReference type="InterPro" id="IPR026875">
    <property type="entry name" value="PHydrolase_assoc_dom"/>
</dbReference>
<dbReference type="NCBIfam" id="TIGR01353">
    <property type="entry name" value="dGTP_triPase"/>
    <property type="match status" value="1"/>
</dbReference>
<dbReference type="NCBIfam" id="NF002326">
    <property type="entry name" value="PRK01286.1-1"/>
    <property type="match status" value="1"/>
</dbReference>
<dbReference type="NCBIfam" id="NF002330">
    <property type="entry name" value="PRK01286.1-5"/>
    <property type="match status" value="1"/>
</dbReference>
<dbReference type="PANTHER" id="PTHR11373:SF43">
    <property type="entry name" value="DEOXYGUANOSINETRIPHOSPHATE TRIPHOSPHOHYDROLASE-LIKE PROTEIN"/>
    <property type="match status" value="1"/>
</dbReference>
<dbReference type="PANTHER" id="PTHR11373">
    <property type="entry name" value="DEOXYNUCLEOSIDE TRIPHOSPHATE TRIPHOSPHOHYDROLASE"/>
    <property type="match status" value="1"/>
</dbReference>
<dbReference type="Pfam" id="PF01966">
    <property type="entry name" value="HD"/>
    <property type="match status" value="1"/>
</dbReference>
<dbReference type="Pfam" id="PF13286">
    <property type="entry name" value="HD_assoc"/>
    <property type="match status" value="1"/>
</dbReference>
<dbReference type="SMART" id="SM00471">
    <property type="entry name" value="HDc"/>
    <property type="match status" value="1"/>
</dbReference>
<dbReference type="SUPFAM" id="SSF109604">
    <property type="entry name" value="HD-domain/PDEase-like"/>
    <property type="match status" value="1"/>
</dbReference>
<dbReference type="PROSITE" id="PS51831">
    <property type="entry name" value="HD"/>
    <property type="match status" value="1"/>
</dbReference>
<name>DGTL1_RICTY</name>